<keyword id="KW-0002">3D-structure</keyword>
<keyword id="KW-0025">Alternative splicing</keyword>
<keyword id="KW-0225">Disease variant</keyword>
<keyword id="KW-0509">mRNA transport</keyword>
<keyword id="KW-0906">Nuclear pore complex</keyword>
<keyword id="KW-0539">Nucleus</keyword>
<keyword id="KW-0597">Phosphoprotein</keyword>
<keyword id="KW-0653">Protein transport</keyword>
<keyword id="KW-1267">Proteomics identification</keyword>
<keyword id="KW-1185">Reference proteome</keyword>
<keyword id="KW-0811">Translocation</keyword>
<keyword id="KW-0813">Transport</keyword>
<reference key="1">
    <citation type="journal article" date="2004" name="Nat. Genet.">
        <title>Complete sequencing and characterization of 21,243 full-length human cDNAs.</title>
        <authorList>
            <person name="Ota T."/>
            <person name="Suzuki Y."/>
            <person name="Nishikawa T."/>
            <person name="Otsuki T."/>
            <person name="Sugiyama T."/>
            <person name="Irie R."/>
            <person name="Wakamatsu A."/>
            <person name="Hayashi K."/>
            <person name="Sato H."/>
            <person name="Nagai K."/>
            <person name="Kimura K."/>
            <person name="Makita H."/>
            <person name="Sekine M."/>
            <person name="Obayashi M."/>
            <person name="Nishi T."/>
            <person name="Shibahara T."/>
            <person name="Tanaka T."/>
            <person name="Ishii S."/>
            <person name="Yamamoto J."/>
            <person name="Saito K."/>
            <person name="Kawai Y."/>
            <person name="Isono Y."/>
            <person name="Nakamura Y."/>
            <person name="Nagahari K."/>
            <person name="Murakami K."/>
            <person name="Yasuda T."/>
            <person name="Iwayanagi T."/>
            <person name="Wagatsuma M."/>
            <person name="Shiratori A."/>
            <person name="Sudo H."/>
            <person name="Hosoiri T."/>
            <person name="Kaku Y."/>
            <person name="Kodaira H."/>
            <person name="Kondo H."/>
            <person name="Sugawara M."/>
            <person name="Takahashi M."/>
            <person name="Kanda K."/>
            <person name="Yokoi T."/>
            <person name="Furuya T."/>
            <person name="Kikkawa E."/>
            <person name="Omura Y."/>
            <person name="Abe K."/>
            <person name="Kamihara K."/>
            <person name="Katsuta N."/>
            <person name="Sato K."/>
            <person name="Tanikawa M."/>
            <person name="Yamazaki M."/>
            <person name="Ninomiya K."/>
            <person name="Ishibashi T."/>
            <person name="Yamashita H."/>
            <person name="Murakawa K."/>
            <person name="Fujimori K."/>
            <person name="Tanai H."/>
            <person name="Kimata M."/>
            <person name="Watanabe M."/>
            <person name="Hiraoka S."/>
            <person name="Chiba Y."/>
            <person name="Ishida S."/>
            <person name="Ono Y."/>
            <person name="Takiguchi S."/>
            <person name="Watanabe S."/>
            <person name="Yosida M."/>
            <person name="Hotuta T."/>
            <person name="Kusano J."/>
            <person name="Kanehori K."/>
            <person name="Takahashi-Fujii A."/>
            <person name="Hara H."/>
            <person name="Tanase T.-O."/>
            <person name="Nomura Y."/>
            <person name="Togiya S."/>
            <person name="Komai F."/>
            <person name="Hara R."/>
            <person name="Takeuchi K."/>
            <person name="Arita M."/>
            <person name="Imose N."/>
            <person name="Musashino K."/>
            <person name="Yuuki H."/>
            <person name="Oshima A."/>
            <person name="Sasaki N."/>
            <person name="Aotsuka S."/>
            <person name="Yoshikawa Y."/>
            <person name="Matsunawa H."/>
            <person name="Ichihara T."/>
            <person name="Shiohata N."/>
            <person name="Sano S."/>
            <person name="Moriya S."/>
            <person name="Momiyama H."/>
            <person name="Satoh N."/>
            <person name="Takami S."/>
            <person name="Terashima Y."/>
            <person name="Suzuki O."/>
            <person name="Nakagawa S."/>
            <person name="Senoh A."/>
            <person name="Mizoguchi H."/>
            <person name="Goto Y."/>
            <person name="Shimizu F."/>
            <person name="Wakebe H."/>
            <person name="Hishigaki H."/>
            <person name="Watanabe T."/>
            <person name="Sugiyama A."/>
            <person name="Takemoto M."/>
            <person name="Kawakami B."/>
            <person name="Yamazaki M."/>
            <person name="Watanabe K."/>
            <person name="Kumagai A."/>
            <person name="Itakura S."/>
            <person name="Fukuzumi Y."/>
            <person name="Fujimori Y."/>
            <person name="Komiyama M."/>
            <person name="Tashiro H."/>
            <person name="Tanigami A."/>
            <person name="Fujiwara T."/>
            <person name="Ono T."/>
            <person name="Yamada K."/>
            <person name="Fujii Y."/>
            <person name="Ozaki K."/>
            <person name="Hirao M."/>
            <person name="Ohmori Y."/>
            <person name="Kawabata A."/>
            <person name="Hikiji T."/>
            <person name="Kobatake N."/>
            <person name="Inagaki H."/>
            <person name="Ikema Y."/>
            <person name="Okamoto S."/>
            <person name="Okitani R."/>
            <person name="Kawakami T."/>
            <person name="Noguchi S."/>
            <person name="Itoh T."/>
            <person name="Shigeta K."/>
            <person name="Senba T."/>
            <person name="Matsumura K."/>
            <person name="Nakajima Y."/>
            <person name="Mizuno T."/>
            <person name="Morinaga M."/>
            <person name="Sasaki M."/>
            <person name="Togashi T."/>
            <person name="Oyama M."/>
            <person name="Hata H."/>
            <person name="Watanabe M."/>
            <person name="Komatsu T."/>
            <person name="Mizushima-Sugano J."/>
            <person name="Satoh T."/>
            <person name="Shirai Y."/>
            <person name="Takahashi Y."/>
            <person name="Nakagawa K."/>
            <person name="Okumura K."/>
            <person name="Nagase T."/>
            <person name="Nomura N."/>
            <person name="Kikuchi H."/>
            <person name="Masuho Y."/>
            <person name="Yamashita R."/>
            <person name="Nakai K."/>
            <person name="Yada T."/>
            <person name="Nakamura Y."/>
            <person name="Ohara O."/>
            <person name="Isogai T."/>
            <person name="Sugano S."/>
        </authorList>
    </citation>
    <scope>NUCLEOTIDE SEQUENCE [LARGE SCALE MRNA] (ISOFORM 3)</scope>
    <scope>NUCLEOTIDE SEQUENCE [LARGE SCALE MRNA] OF 31-1436 (ISOFORM 1)</scope>
    <scope>NUCLEOTIDE SEQUENCE [LARGE SCALE MRNA] OF 32-1436 (ISOFORM 2)</scope>
    <scope>VARIANT THR-40</scope>
    <source>
        <tissue>Small intestine</tissue>
        <tissue>Testis</tissue>
        <tissue>Trachea</tissue>
    </source>
</reference>
<reference key="2">
    <citation type="journal article" date="2006" name="Nature">
        <title>Human chromosome 11 DNA sequence and analysis including novel gene identification.</title>
        <authorList>
            <person name="Taylor T.D."/>
            <person name="Noguchi H."/>
            <person name="Totoki Y."/>
            <person name="Toyoda A."/>
            <person name="Kuroki Y."/>
            <person name="Dewar K."/>
            <person name="Lloyd C."/>
            <person name="Itoh T."/>
            <person name="Takeda T."/>
            <person name="Kim D.-W."/>
            <person name="She X."/>
            <person name="Barlow K.F."/>
            <person name="Bloom T."/>
            <person name="Bruford E."/>
            <person name="Chang J.L."/>
            <person name="Cuomo C.A."/>
            <person name="Eichler E."/>
            <person name="FitzGerald M.G."/>
            <person name="Jaffe D.B."/>
            <person name="LaButti K."/>
            <person name="Nicol R."/>
            <person name="Park H.-S."/>
            <person name="Seaman C."/>
            <person name="Sougnez C."/>
            <person name="Yang X."/>
            <person name="Zimmer A.R."/>
            <person name="Zody M.C."/>
            <person name="Birren B.W."/>
            <person name="Nusbaum C."/>
            <person name="Fujiyama A."/>
            <person name="Hattori M."/>
            <person name="Rogers J."/>
            <person name="Lander E.S."/>
            <person name="Sakaki Y."/>
        </authorList>
    </citation>
    <scope>NUCLEOTIDE SEQUENCE [LARGE SCALE GENOMIC DNA]</scope>
</reference>
<reference key="3">
    <citation type="journal article" date="2004" name="Genome Res.">
        <title>The status, quality, and expansion of the NIH full-length cDNA project: the Mammalian Gene Collection (MGC).</title>
        <authorList>
            <consortium name="The MGC Project Team"/>
        </authorList>
    </citation>
    <scope>NUCLEOTIDE SEQUENCE [LARGE SCALE MRNA] (ISOFORMS 1 AND 2)</scope>
    <scope>VARIANT ALA-351</scope>
    <source>
        <tissue>Muscle</tissue>
        <tissue>Skin</tissue>
    </source>
</reference>
<reference key="4">
    <citation type="journal article" date="1996" name="DNA Res.">
        <title>Prediction of the coding sequences of unidentified human genes. V. The coding sequences of 40 new genes (KIAA0161-KIAA0200) deduced by analysis of cDNA clones from human cell line KG-1.</title>
        <authorList>
            <person name="Nagase T."/>
            <person name="Seki N."/>
            <person name="Ishikawa K."/>
            <person name="Tanaka A."/>
            <person name="Nomura N."/>
        </authorList>
    </citation>
    <scope>NUCLEOTIDE SEQUENCE [LARGE SCALE MRNA] OF 37-1436 (ISOFORM 1)</scope>
    <source>
        <tissue>Bone marrow</tissue>
    </source>
</reference>
<reference key="5">
    <citation type="journal article" date="2001" name="J. Cell Biol.">
        <title>An evolutionarily conserved NPC subcomplex, which redistributes in part to kinetochores in mammalian cells.</title>
        <authorList>
            <person name="Belgareh N."/>
            <person name="Rabut G."/>
            <person name="Bai S.W."/>
            <person name="van Overbeek M."/>
            <person name="Beaudouin J."/>
            <person name="Daigle N."/>
            <person name="Zatsepina O.V."/>
            <person name="Pasteau F."/>
            <person name="Labas V."/>
            <person name="Fromont-Racine M."/>
            <person name="Ellenberg J."/>
            <person name="Doye V."/>
        </authorList>
    </citation>
    <scope>FUNCTION</scope>
    <scope>IDENTIFICATION IN THE NUCLEAR PORE COMPLEX</scope>
    <scope>SUBUNIT</scope>
    <scope>SUBCELLULAR LOCATION</scope>
</reference>
<reference key="6">
    <citation type="journal article" date="2001" name="J. Cell Biol.">
        <title>Novel vertebrate nucleoporins Nup133 and Nup160 play a role in mRNA export.</title>
        <authorList>
            <person name="Vasu S."/>
            <person name="Shah S."/>
            <person name="Orjalo A."/>
            <person name="Park M."/>
            <person name="Fischer W.H."/>
            <person name="Forbes D.J."/>
        </authorList>
    </citation>
    <scope>FUNCTION</scope>
    <scope>IDENTIFICATION IN THE NUCLEAR PORE COMPLEX</scope>
    <scope>SUBUNIT</scope>
    <scope>SUBCELLULAR LOCATION</scope>
</reference>
<reference key="7">
    <citation type="journal article" date="2006" name="Cell">
        <title>Global, in vivo, and site-specific phosphorylation dynamics in signaling networks.</title>
        <authorList>
            <person name="Olsen J.V."/>
            <person name="Blagoev B."/>
            <person name="Gnad F."/>
            <person name="Macek B."/>
            <person name="Kumar C."/>
            <person name="Mortensen P."/>
            <person name="Mann M."/>
        </authorList>
    </citation>
    <scope>PHOSPHORYLATION [LARGE SCALE ANALYSIS] AT SER-1157</scope>
    <scope>IDENTIFICATION BY MASS SPECTROMETRY [LARGE SCALE ANALYSIS]</scope>
    <source>
        <tissue>Cervix carcinoma</tissue>
    </source>
</reference>
<reference key="8">
    <citation type="journal article" date="2008" name="Mol. Cell">
        <title>Kinase-selective enrichment enables quantitative phosphoproteomics of the kinome across the cell cycle.</title>
        <authorList>
            <person name="Daub H."/>
            <person name="Olsen J.V."/>
            <person name="Bairlein M."/>
            <person name="Gnad F."/>
            <person name="Oppermann F.S."/>
            <person name="Korner R."/>
            <person name="Greff Z."/>
            <person name="Keri G."/>
            <person name="Stemmann O."/>
            <person name="Mann M."/>
        </authorList>
    </citation>
    <scope>PHOSPHORYLATION [LARGE SCALE ANALYSIS] AT SER-1157</scope>
    <scope>IDENTIFICATION BY MASS SPECTROMETRY [LARGE SCALE ANALYSIS]</scope>
    <source>
        <tissue>Cervix carcinoma</tissue>
    </source>
</reference>
<reference key="9">
    <citation type="journal article" date="2008" name="Proc. Natl. Acad. Sci. U.S.A.">
        <title>A quantitative atlas of mitotic phosphorylation.</title>
        <authorList>
            <person name="Dephoure N."/>
            <person name="Zhou C."/>
            <person name="Villen J."/>
            <person name="Beausoleil S.A."/>
            <person name="Bakalarski C.E."/>
            <person name="Elledge S.J."/>
            <person name="Gygi S.P."/>
        </authorList>
    </citation>
    <scope>PHOSPHORYLATION [LARGE SCALE ANALYSIS] AT SER-1157</scope>
    <scope>IDENTIFICATION BY MASS SPECTROMETRY [LARGE SCALE ANALYSIS]</scope>
    <source>
        <tissue>Cervix carcinoma</tissue>
    </source>
</reference>
<reference key="10">
    <citation type="journal article" date="2009" name="Sci. Signal.">
        <title>Quantitative phosphoproteomic analysis of T cell receptor signaling reveals system-wide modulation of protein-protein interactions.</title>
        <authorList>
            <person name="Mayya V."/>
            <person name="Lundgren D.H."/>
            <person name="Hwang S.-I."/>
            <person name="Rezaul K."/>
            <person name="Wu L."/>
            <person name="Eng J.K."/>
            <person name="Rodionov V."/>
            <person name="Han D.K."/>
        </authorList>
    </citation>
    <scope>PHOSPHORYLATION [LARGE SCALE ANALYSIS] AT SER-1157</scope>
    <scope>IDENTIFICATION BY MASS SPECTROMETRY [LARGE SCALE ANALYSIS]</scope>
    <source>
        <tissue>Leukemic T-cell</tissue>
    </source>
</reference>
<reference key="11">
    <citation type="journal article" date="2010" name="Sci. Signal.">
        <title>Quantitative phosphoproteomics reveals widespread full phosphorylation site occupancy during mitosis.</title>
        <authorList>
            <person name="Olsen J.V."/>
            <person name="Vermeulen M."/>
            <person name="Santamaria A."/>
            <person name="Kumar C."/>
            <person name="Miller M.L."/>
            <person name="Jensen L.J."/>
            <person name="Gnad F."/>
            <person name="Cox J."/>
            <person name="Jensen T.S."/>
            <person name="Nigg E.A."/>
            <person name="Brunak S."/>
            <person name="Mann M."/>
        </authorList>
    </citation>
    <scope>PHOSPHORYLATION [LARGE SCALE ANALYSIS] AT SER-1157</scope>
    <scope>IDENTIFICATION BY MASS SPECTROMETRY [LARGE SCALE ANALYSIS]</scope>
    <source>
        <tissue>Cervix carcinoma</tissue>
    </source>
</reference>
<reference key="12">
    <citation type="journal article" date="2011" name="BMC Syst. Biol.">
        <title>Initial characterization of the human central proteome.</title>
        <authorList>
            <person name="Burkard T.R."/>
            <person name="Planyavsky M."/>
            <person name="Kaupe I."/>
            <person name="Breitwieser F.P."/>
            <person name="Buerckstuemmer T."/>
            <person name="Bennett K.L."/>
            <person name="Superti-Furga G."/>
            <person name="Colinge J."/>
        </authorList>
    </citation>
    <scope>IDENTIFICATION BY MASS SPECTROMETRY [LARGE SCALE ANALYSIS]</scope>
</reference>
<reference key="13">
    <citation type="journal article" date="2011" name="Sci. Signal.">
        <title>System-wide temporal characterization of the proteome and phosphoproteome of human embryonic stem cell differentiation.</title>
        <authorList>
            <person name="Rigbolt K.T."/>
            <person name="Prokhorova T.A."/>
            <person name="Akimov V."/>
            <person name="Henningsen J."/>
            <person name="Johansen P.T."/>
            <person name="Kratchmarova I."/>
            <person name="Kassem M."/>
            <person name="Mann M."/>
            <person name="Olsen J.V."/>
            <person name="Blagoev B."/>
        </authorList>
    </citation>
    <scope>PHOSPHORYLATION [LARGE SCALE ANALYSIS] AT SER-1157</scope>
    <scope>IDENTIFICATION BY MASS SPECTROMETRY [LARGE SCALE ANALYSIS]</scope>
</reference>
<reference key="14">
    <citation type="journal article" date="2013" name="J. Proteome Res.">
        <title>Toward a comprehensive characterization of a human cancer cell phosphoproteome.</title>
        <authorList>
            <person name="Zhou H."/>
            <person name="Di Palma S."/>
            <person name="Preisinger C."/>
            <person name="Peng M."/>
            <person name="Polat A.N."/>
            <person name="Heck A.J."/>
            <person name="Mohammed S."/>
        </authorList>
    </citation>
    <scope>PHOSPHORYLATION [LARGE SCALE ANALYSIS] AT SER-44; SER-490; SER-949 AND SER-1157</scope>
    <scope>IDENTIFICATION BY MASS SPECTROMETRY [LARGE SCALE ANALYSIS]</scope>
    <source>
        <tissue>Cervix carcinoma</tissue>
        <tissue>Erythroleukemia</tissue>
    </source>
</reference>
<reference key="15">
    <citation type="journal article" date="2014" name="J. Proteomics">
        <title>An enzyme assisted RP-RPLC approach for in-depth analysis of human liver phosphoproteome.</title>
        <authorList>
            <person name="Bian Y."/>
            <person name="Song C."/>
            <person name="Cheng K."/>
            <person name="Dong M."/>
            <person name="Wang F."/>
            <person name="Huang J."/>
            <person name="Sun D."/>
            <person name="Wang L."/>
            <person name="Ye M."/>
            <person name="Zou H."/>
        </authorList>
    </citation>
    <scope>IDENTIFICATION BY MASS SPECTROMETRY [LARGE SCALE ANALYSIS]</scope>
    <source>
        <tissue>Liver</tissue>
    </source>
</reference>
<reference key="16">
    <citation type="journal article" date="2018" name="J. Clin. Invest.">
        <title>Mutations in multiple components of the nuclear pore complex cause nephrotic syndrome.</title>
        <authorList>
            <person name="Braun D.A."/>
            <person name="Lovric S."/>
            <person name="Schapiro D."/>
            <person name="Schneider R."/>
            <person name="Marquez J."/>
            <person name="Asif M."/>
            <person name="Hussain M.S."/>
            <person name="Daga A."/>
            <person name="Widmeier E."/>
            <person name="Rao J."/>
            <person name="Ashraf S."/>
            <person name="Tan W."/>
            <person name="Lusk C.P."/>
            <person name="Kolb A."/>
            <person name="Jobst-Schwan T."/>
            <person name="Schmidt J.M."/>
            <person name="Hoogstraten C.A."/>
            <person name="Eddy K."/>
            <person name="Kitzler T.M."/>
            <person name="Shril S."/>
            <person name="Moawia A."/>
            <person name="Schrage K."/>
            <person name="Khayyat A.I.A."/>
            <person name="Lawson J.A."/>
            <person name="Gee H.Y."/>
            <person name="Warejko J.K."/>
            <person name="Hermle T."/>
            <person name="Majmundar A.J."/>
            <person name="Hugo H."/>
            <person name="Budde B."/>
            <person name="Motameny S."/>
            <person name="Altmueller J."/>
            <person name="Noegel A.A."/>
            <person name="Fathy H.M."/>
            <person name="Gale D.P."/>
            <person name="Waseem S.S."/>
            <person name="Khan A."/>
            <person name="Kerecuk L."/>
            <person name="Hashmi S."/>
            <person name="Mohebbi N."/>
            <person name="Ettenger R."/>
            <person name="Serdaroglu E."/>
            <person name="Alhasan K.A."/>
            <person name="Hashem M."/>
            <person name="Goncalves S."/>
            <person name="Ariceta G."/>
            <person name="Ubetagoyena M."/>
            <person name="Antonin W."/>
            <person name="Baig S.M."/>
            <person name="Alkuraya F.S."/>
            <person name="Shen Q."/>
            <person name="Xu H."/>
            <person name="Antignac C."/>
            <person name="Lifton R.P."/>
            <person name="Mane S."/>
            <person name="Nuernberg P."/>
            <person name="Khokha M.K."/>
            <person name="Hildebrandt F."/>
        </authorList>
    </citation>
    <scope>INVOLVEMENT IN NPHS19</scope>
    <scope>VARIANTS NPHS19 LYS-803 AND 910-ARG--LEU-1436 DEL</scope>
</reference>
<reference key="17">
    <citation type="journal article" date="2019" name="J. Am. Soc. Nephrol.">
        <title>Mutations in NUP160 Are Implicated in Steroid-Resistant Nephrotic Syndrome.</title>
        <authorList>
            <person name="Zhao F."/>
            <person name="Zhu J.Y."/>
            <person name="Richman A."/>
            <person name="Fu Y."/>
            <person name="Huang W."/>
            <person name="Chen N."/>
            <person name="Pan X."/>
            <person name="Yi C."/>
            <person name="Ding X."/>
            <person name="Wang S."/>
            <person name="Wang P."/>
            <person name="Nie X."/>
            <person name="Huang J."/>
            <person name="Yang Y."/>
            <person name="Yu Z."/>
            <person name="Han Z."/>
        </authorList>
    </citation>
    <scope>VARIANTS NPHS19 LYS-803 AND 1173-ARG--LEU-1436 DEL</scope>
</reference>
<sequence>MLHLSAAPPAPPPEVTATARPCLCSVGRRGDGGKMAAAGALERSFVELSGAERERPRHFREFTVCSIGTANAVAGAVKYSESAGGFYYVESGKLFSVTRNRFIHWKTSGDTLELMEESLDINLLNNAIRLKFQNCSVLPGGVYVSETQNRVIILMLTNQTVHRLLLPHPSRMYRSELVVDSQMQSIFTDIGKVDFTDPCNYQLIPAVPGISPNSTASTAWLSSDGEALFALPCASGGIFVLKLPPYDIPGMVSVVELKQSSVMQRLLTGWMPTAIRGDQSPSDRPLSLAVHCVEHDAFIFALCQDHKLRMWSYKEQMCLMVADMLEYVPVKKDLRLTAGTGHKLRLAYSPTMGLYLGIYMHAPKRGQFCIFQLVSTESNRYSLDHISSLFTSQETLIDFALTSTDIWALWHDAENQTVVKYINFEHNVAGQWNPVFMQPLPEEEIVIRDDQDPREMYLQSLFTPGQFTNEALCKALQIFCRGTERNLDLSWSELKKEVTLAVENELQGSVTEYEFSQEEFRNLQQEFWCKFYACCLQYQEALSHPLALHLNPHTNMVCLLKKGYLSFLIPSSLVDHLYLLPYENLLTEDETTISDDVDIARDVICLIKCLRLIEESVTVDMSVIMEMSCYNLQSPEKAAEQILEDMITIDVENVMEDICSKLQEIRNPIHAIGLLIREMDYETEVEMEKGFNPAQPLNIRMNLTQLYGSNTAGYIVCRGVHKIASTRFLICRDLLILQQLLMRLGDAVIWGTGQLFQAQQDLLHRTAPLLLSYYLIKWGSECLATDVPLDTLESNLQHLSVLELTDSGALMANRFVSSPQTIVELFFQEVARKHIISHLFSQPKAPLSQTGLNWPEMITAITSYLLQLLWPSNPGCLFLECLMGNCQYVQLQDYIQLLHPWCQVNVGSCRFMLGRCYLVTGEGQKALECFCQAASEVGKEEFLDRLIRSEDGEIVSTPRLQYYDKVLRLLDVIGLPELVIQLATSAITEAGDDWKSQATLRTCIFKHHLDLGHNSQAYEALTQIPDSSRQLDCLRQLVVVLCERSQLQDLVEFPYVNLHNEVVGIIESRARAVDLMTHNYYELLYAFHIYRHNYRKAGTVMFEYGMRLGREVRTLRGLEKQGNCYLAALNCLRLIRPEYAWIVQPVSGAVYDRPGASPKRNHDGECTAAPTNRQIEILELEDLEKECSLARIRLTLAQHDPSAVAVAGSSSAEEMVTLLVQAGLFDTAISLCQTFKLPLTPVFEGLAFKCIKLQFGGEAAQAEAWAWLAANQLSSVITTKESSATDEAWRLLSTYLERYKVQNNLYHHCVINKLLSHGVPLPNWLINSYKKVDAAELLRLYLNYDLLEEAVDLVSEYVDAVLGKGHQYFGIEFPLSATAPMVWLPYSSIDQLLQALGENSANSHNIALSQKILDKLEDYQQKVDKATRDLLYRRTL</sequence>
<proteinExistence type="evidence at protein level"/>
<organism>
    <name type="scientific">Homo sapiens</name>
    <name type="common">Human</name>
    <dbReference type="NCBI Taxonomy" id="9606"/>
    <lineage>
        <taxon>Eukaryota</taxon>
        <taxon>Metazoa</taxon>
        <taxon>Chordata</taxon>
        <taxon>Craniata</taxon>
        <taxon>Vertebrata</taxon>
        <taxon>Euteleostomi</taxon>
        <taxon>Mammalia</taxon>
        <taxon>Eutheria</taxon>
        <taxon>Euarchontoglires</taxon>
        <taxon>Primates</taxon>
        <taxon>Haplorrhini</taxon>
        <taxon>Catarrhini</taxon>
        <taxon>Hominidae</taxon>
        <taxon>Homo</taxon>
    </lineage>
</organism>
<protein>
    <recommendedName>
        <fullName>Nuclear pore complex protein Nup160</fullName>
    </recommendedName>
    <alternativeName>
        <fullName>160 kDa nucleoporin</fullName>
    </alternativeName>
    <alternativeName>
        <fullName>Nucleoporin Nup160</fullName>
    </alternativeName>
</protein>
<dbReference type="EMBL" id="AK026236">
    <property type="protein sequence ID" value="BAB15406.1"/>
    <property type="status" value="ALT_INIT"/>
    <property type="molecule type" value="mRNA"/>
</dbReference>
<dbReference type="EMBL" id="AK302396">
    <property type="protein sequence ID" value="BAG63710.1"/>
    <property type="molecule type" value="mRNA"/>
</dbReference>
<dbReference type="EMBL" id="AK304308">
    <property type="protein sequence ID" value="BAG65161.1"/>
    <property type="status" value="ALT_INIT"/>
    <property type="molecule type" value="mRNA"/>
</dbReference>
<dbReference type="EMBL" id="AC021443">
    <property type="status" value="NOT_ANNOTATED_CDS"/>
    <property type="molecule type" value="Genomic_DNA"/>
</dbReference>
<dbReference type="EMBL" id="AC023232">
    <property type="status" value="NOT_ANNOTATED_CDS"/>
    <property type="molecule type" value="Genomic_DNA"/>
</dbReference>
<dbReference type="EMBL" id="BC008700">
    <property type="protein sequence ID" value="AAH08700.1"/>
    <property type="molecule type" value="mRNA"/>
</dbReference>
<dbReference type="EMBL" id="BC009822">
    <property type="protein sequence ID" value="AAH09822.1"/>
    <property type="status" value="ALT_INIT"/>
    <property type="molecule type" value="mRNA"/>
</dbReference>
<dbReference type="EMBL" id="BC125227">
    <property type="protein sequence ID" value="AAI25228.1"/>
    <property type="molecule type" value="mRNA"/>
</dbReference>
<dbReference type="EMBL" id="BC125228">
    <property type="protein sequence ID" value="AAI25229.1"/>
    <property type="molecule type" value="mRNA"/>
</dbReference>
<dbReference type="EMBL" id="D83781">
    <property type="protein sequence ID" value="BAA12110.1"/>
    <property type="status" value="ALT_SEQ"/>
    <property type="molecule type" value="mRNA"/>
</dbReference>
<dbReference type="CCDS" id="CCDS81567.1">
    <molecule id="Q12769-2"/>
</dbReference>
<dbReference type="PIR" id="G02870">
    <property type="entry name" value="G02870"/>
</dbReference>
<dbReference type="RefSeq" id="NP_001305328.1">
    <molecule id="Q12769-2"/>
    <property type="nucleotide sequence ID" value="NM_001318399.1"/>
</dbReference>
<dbReference type="RefSeq" id="NP_056046.1">
    <property type="nucleotide sequence ID" value="NM_015231.2"/>
</dbReference>
<dbReference type="PDB" id="5A9Q">
    <property type="method" value="EM"/>
    <property type="resolution" value="23.00 A"/>
    <property type="chains" value="1/J/S/a=1-1436"/>
</dbReference>
<dbReference type="PDB" id="7PEQ">
    <property type="method" value="EM"/>
    <property type="resolution" value="35.00 A"/>
    <property type="chains" value="AJ/BJ/CJ/DJ=1-1436"/>
</dbReference>
<dbReference type="PDB" id="7R5J">
    <property type="method" value="EM"/>
    <property type="resolution" value="50.00 A"/>
    <property type="chains" value="R0/R1/R2/R3=1-1436"/>
</dbReference>
<dbReference type="PDB" id="7R5K">
    <property type="method" value="EM"/>
    <property type="resolution" value="12.00 A"/>
    <property type="chains" value="R0/R1/R2/R3=1-1436"/>
</dbReference>
<dbReference type="PDBsum" id="5A9Q"/>
<dbReference type="PDBsum" id="7PEQ"/>
<dbReference type="PDBsum" id="7R5J"/>
<dbReference type="PDBsum" id="7R5K"/>
<dbReference type="EMDB" id="EMD-14321"/>
<dbReference type="EMDB" id="EMD-14322"/>
<dbReference type="SMR" id="Q12769"/>
<dbReference type="BioGRID" id="116879">
    <property type="interactions" value="200"/>
</dbReference>
<dbReference type="ComplexPortal" id="CPX-873">
    <property type="entry name" value="Nuclear pore complex"/>
</dbReference>
<dbReference type="CORUM" id="Q12769"/>
<dbReference type="DIP" id="DIP-31262N"/>
<dbReference type="FunCoup" id="Q12769">
    <property type="interactions" value="3614"/>
</dbReference>
<dbReference type="IntAct" id="Q12769">
    <property type="interactions" value="84"/>
</dbReference>
<dbReference type="MINT" id="Q12769"/>
<dbReference type="STRING" id="9606.ENSP00000367721"/>
<dbReference type="TCDB" id="1.I.1.1.3">
    <property type="family name" value="the nuclear pore complex (npc) family"/>
</dbReference>
<dbReference type="GlyCosmos" id="Q12769">
    <property type="glycosylation" value="1 site, 1 glycan"/>
</dbReference>
<dbReference type="GlyGen" id="Q12769">
    <property type="glycosylation" value="1 site, 1 O-linked glycan (1 site)"/>
</dbReference>
<dbReference type="iPTMnet" id="Q12769"/>
<dbReference type="MetOSite" id="Q12769"/>
<dbReference type="PhosphoSitePlus" id="Q12769"/>
<dbReference type="SwissPalm" id="Q12769"/>
<dbReference type="BioMuta" id="NUP160"/>
<dbReference type="DMDM" id="238054372"/>
<dbReference type="jPOST" id="Q12769"/>
<dbReference type="MassIVE" id="Q12769"/>
<dbReference type="PaxDb" id="9606-ENSP00000367721"/>
<dbReference type="PeptideAtlas" id="Q12769"/>
<dbReference type="ProteomicsDB" id="58912">
    <molecule id="Q12769-1"/>
</dbReference>
<dbReference type="ProteomicsDB" id="58913">
    <molecule id="Q12769-2"/>
</dbReference>
<dbReference type="ProteomicsDB" id="58914">
    <molecule id="Q12769-3"/>
</dbReference>
<dbReference type="Pumba" id="Q12769"/>
<dbReference type="Antibodypedia" id="26888">
    <property type="antibodies" value="236 antibodies from 32 providers"/>
</dbReference>
<dbReference type="DNASU" id="23279"/>
<dbReference type="Ensembl" id="ENST00000526870.1">
    <molecule id="Q12769-2"/>
    <property type="protein sequence ID" value="ENSP00000431495.1"/>
    <property type="gene ID" value="ENSG00000030066.14"/>
</dbReference>
<dbReference type="Ensembl" id="ENST00000694866.1">
    <molecule id="Q12769-1"/>
    <property type="protein sequence ID" value="ENSP00000511549.1"/>
    <property type="gene ID" value="ENSG00000030066.14"/>
</dbReference>
<dbReference type="GeneID" id="23279"/>
<dbReference type="KEGG" id="hsa:23279"/>
<dbReference type="UCSC" id="uc001ngm.4">
    <molecule id="Q12769-1"/>
    <property type="organism name" value="human"/>
</dbReference>
<dbReference type="AGR" id="HGNC:18017"/>
<dbReference type="CTD" id="23279"/>
<dbReference type="DisGeNET" id="23279"/>
<dbReference type="GeneCards" id="NUP160"/>
<dbReference type="HGNC" id="HGNC:18017">
    <property type="gene designation" value="NUP160"/>
</dbReference>
<dbReference type="HPA" id="ENSG00000030066">
    <property type="expression patterns" value="Low tissue specificity"/>
</dbReference>
<dbReference type="MalaCards" id="NUP160"/>
<dbReference type="MIM" id="607614">
    <property type="type" value="gene"/>
</dbReference>
<dbReference type="MIM" id="618178">
    <property type="type" value="phenotype"/>
</dbReference>
<dbReference type="neXtProt" id="NX_Q12769"/>
<dbReference type="OpenTargets" id="ENSG00000030066"/>
<dbReference type="Orphanet" id="656">
    <property type="disease" value="Hereditary steroid-resistant nephrotic syndrome"/>
</dbReference>
<dbReference type="PharmGKB" id="PA31850"/>
<dbReference type="VEuPathDB" id="HostDB:ENSG00000030066"/>
<dbReference type="eggNOG" id="KOG4521">
    <property type="taxonomic scope" value="Eukaryota"/>
</dbReference>
<dbReference type="GeneTree" id="ENSGT00390000000972"/>
<dbReference type="HOGENOM" id="CLU_005083_0_0_1"/>
<dbReference type="InParanoid" id="Q12769"/>
<dbReference type="OMA" id="TLWKNNM"/>
<dbReference type="OrthoDB" id="67716at2759"/>
<dbReference type="PAN-GO" id="Q12769">
    <property type="GO annotations" value="2 GO annotations based on evolutionary models"/>
</dbReference>
<dbReference type="PhylomeDB" id="Q12769"/>
<dbReference type="TreeFam" id="TF353082"/>
<dbReference type="PathwayCommons" id="Q12769"/>
<dbReference type="Reactome" id="R-HSA-1169408">
    <property type="pathway name" value="ISG15 antiviral mechanism"/>
</dbReference>
<dbReference type="Reactome" id="R-HSA-141444">
    <property type="pathway name" value="Amplification of signal from unattached kinetochores via a MAD2 inhibitory signal"/>
</dbReference>
<dbReference type="Reactome" id="R-HSA-159227">
    <property type="pathway name" value="Transport of the SLBP independent Mature mRNA"/>
</dbReference>
<dbReference type="Reactome" id="R-HSA-159230">
    <property type="pathway name" value="Transport of the SLBP Dependant Mature mRNA"/>
</dbReference>
<dbReference type="Reactome" id="R-HSA-159231">
    <property type="pathway name" value="Transport of Mature mRNA Derived from an Intronless Transcript"/>
</dbReference>
<dbReference type="Reactome" id="R-HSA-159236">
    <property type="pathway name" value="Transport of Mature mRNA derived from an Intron-Containing Transcript"/>
</dbReference>
<dbReference type="Reactome" id="R-HSA-165054">
    <property type="pathway name" value="Rev-mediated nuclear export of HIV RNA"/>
</dbReference>
<dbReference type="Reactome" id="R-HSA-168271">
    <property type="pathway name" value="Transport of Ribonucleoproteins into the Host Nucleus"/>
</dbReference>
<dbReference type="Reactome" id="R-HSA-168276">
    <property type="pathway name" value="NS1 Mediated Effects on Host Pathways"/>
</dbReference>
<dbReference type="Reactome" id="R-HSA-168325">
    <property type="pathway name" value="Viral Messenger RNA Synthesis"/>
</dbReference>
<dbReference type="Reactome" id="R-HSA-168333">
    <property type="pathway name" value="NEP/NS2 Interacts with the Cellular Export Machinery"/>
</dbReference>
<dbReference type="Reactome" id="R-HSA-170822">
    <property type="pathway name" value="Regulation of Glucokinase by Glucokinase Regulatory Protein"/>
</dbReference>
<dbReference type="Reactome" id="R-HSA-180746">
    <property type="pathway name" value="Nuclear import of Rev protein"/>
</dbReference>
<dbReference type="Reactome" id="R-HSA-180910">
    <property type="pathway name" value="Vpr-mediated nuclear import of PICs"/>
</dbReference>
<dbReference type="Reactome" id="R-HSA-191859">
    <property type="pathway name" value="snRNP Assembly"/>
</dbReference>
<dbReference type="Reactome" id="R-HSA-2467813">
    <property type="pathway name" value="Separation of Sister Chromatids"/>
</dbReference>
<dbReference type="Reactome" id="R-HSA-2500257">
    <property type="pathway name" value="Resolution of Sister Chromatid Cohesion"/>
</dbReference>
<dbReference type="Reactome" id="R-HSA-3108214">
    <property type="pathway name" value="SUMOylation of DNA damage response and repair proteins"/>
</dbReference>
<dbReference type="Reactome" id="R-HSA-3232142">
    <property type="pathway name" value="SUMOylation of ubiquitinylation proteins"/>
</dbReference>
<dbReference type="Reactome" id="R-HSA-3301854">
    <property type="pathway name" value="Nuclear Pore Complex (NPC) Disassembly"/>
</dbReference>
<dbReference type="Reactome" id="R-HSA-3371453">
    <property type="pathway name" value="Regulation of HSF1-mediated heat shock response"/>
</dbReference>
<dbReference type="Reactome" id="R-HSA-4085377">
    <property type="pathway name" value="SUMOylation of SUMOylation proteins"/>
</dbReference>
<dbReference type="Reactome" id="R-HSA-4551638">
    <property type="pathway name" value="SUMOylation of chromatin organization proteins"/>
</dbReference>
<dbReference type="Reactome" id="R-HSA-4570464">
    <property type="pathway name" value="SUMOylation of RNA binding proteins"/>
</dbReference>
<dbReference type="Reactome" id="R-HSA-4615885">
    <property type="pathway name" value="SUMOylation of DNA replication proteins"/>
</dbReference>
<dbReference type="Reactome" id="R-HSA-5578749">
    <property type="pathway name" value="Transcriptional regulation by small RNAs"/>
</dbReference>
<dbReference type="Reactome" id="R-HSA-5619107">
    <property type="pathway name" value="Defective TPR may confer susceptibility towards thyroid papillary carcinoma (TPC)"/>
</dbReference>
<dbReference type="Reactome" id="R-HSA-5663220">
    <property type="pathway name" value="RHO GTPases Activate Formins"/>
</dbReference>
<dbReference type="Reactome" id="R-HSA-6784531">
    <property type="pathway name" value="tRNA processing in the nucleus"/>
</dbReference>
<dbReference type="Reactome" id="R-HSA-68877">
    <property type="pathway name" value="Mitotic Prometaphase"/>
</dbReference>
<dbReference type="Reactome" id="R-HSA-9609690">
    <property type="pathway name" value="HCMV Early Events"/>
</dbReference>
<dbReference type="Reactome" id="R-HSA-9610379">
    <property type="pathway name" value="HCMV Late Events"/>
</dbReference>
<dbReference type="Reactome" id="R-HSA-9615933">
    <property type="pathway name" value="Postmitotic nuclear pore complex (NPC) reformation"/>
</dbReference>
<dbReference type="Reactome" id="R-HSA-9648025">
    <property type="pathway name" value="EML4 and NUDC in mitotic spindle formation"/>
</dbReference>
<dbReference type="Reactome" id="R-HSA-9705671">
    <property type="pathway name" value="SARS-CoV-2 activates/modulates innate and adaptive immune responses"/>
</dbReference>
<dbReference type="SignaLink" id="Q12769"/>
<dbReference type="SIGNOR" id="Q12769"/>
<dbReference type="BioGRID-ORCS" id="23279">
    <property type="hits" value="769 hits in 1131 CRISPR screens"/>
</dbReference>
<dbReference type="CD-CODE" id="8C2F96ED">
    <property type="entry name" value="Centrosome"/>
</dbReference>
<dbReference type="CD-CODE" id="D6A53B8E">
    <property type="entry name" value="Nuclear pore complex"/>
</dbReference>
<dbReference type="ChiTaRS" id="NUP160">
    <property type="organism name" value="human"/>
</dbReference>
<dbReference type="GeneWiki" id="NUP160"/>
<dbReference type="GenomeRNAi" id="23279"/>
<dbReference type="Pharos" id="Q12769">
    <property type="development level" value="Tbio"/>
</dbReference>
<dbReference type="PRO" id="PR:Q12769"/>
<dbReference type="Proteomes" id="UP000005640">
    <property type="component" value="Chromosome 11"/>
</dbReference>
<dbReference type="RNAct" id="Q12769">
    <property type="molecule type" value="protein"/>
</dbReference>
<dbReference type="Bgee" id="ENSG00000030066">
    <property type="expression patterns" value="Expressed in oocyte and 200 other cell types or tissues"/>
</dbReference>
<dbReference type="ExpressionAtlas" id="Q12769">
    <property type="expression patterns" value="baseline and differential"/>
</dbReference>
<dbReference type="GO" id="GO:0005829">
    <property type="term" value="C:cytosol"/>
    <property type="evidence" value="ECO:0000304"/>
    <property type="project" value="Reactome"/>
</dbReference>
<dbReference type="GO" id="GO:0005635">
    <property type="term" value="C:nuclear envelope"/>
    <property type="evidence" value="ECO:0000314"/>
    <property type="project" value="ComplexPortal"/>
</dbReference>
<dbReference type="GO" id="GO:0005643">
    <property type="term" value="C:nuclear pore"/>
    <property type="evidence" value="ECO:0000314"/>
    <property type="project" value="UniProtKB"/>
</dbReference>
<dbReference type="GO" id="GO:0031080">
    <property type="term" value="C:nuclear pore outer ring"/>
    <property type="evidence" value="ECO:0000314"/>
    <property type="project" value="UniProtKB"/>
</dbReference>
<dbReference type="GO" id="GO:0017056">
    <property type="term" value="F:structural constituent of nuclear pore"/>
    <property type="evidence" value="ECO:0000314"/>
    <property type="project" value="UniProtKB"/>
</dbReference>
<dbReference type="GO" id="GO:0006406">
    <property type="term" value="P:mRNA export from nucleus"/>
    <property type="evidence" value="ECO:0000314"/>
    <property type="project" value="UniProtKB"/>
</dbReference>
<dbReference type="GO" id="GO:0072006">
    <property type="term" value="P:nephron development"/>
    <property type="evidence" value="ECO:0000315"/>
    <property type="project" value="UniProtKB"/>
</dbReference>
<dbReference type="GO" id="GO:0006913">
    <property type="term" value="P:nucleocytoplasmic transport"/>
    <property type="evidence" value="ECO:0000303"/>
    <property type="project" value="ComplexPortal"/>
</dbReference>
<dbReference type="GO" id="GO:0015031">
    <property type="term" value="P:protein transport"/>
    <property type="evidence" value="ECO:0007669"/>
    <property type="project" value="UniProtKB-KW"/>
</dbReference>
<dbReference type="InterPro" id="IPR021717">
    <property type="entry name" value="Nucleoporin_Nup160"/>
</dbReference>
<dbReference type="InterPro" id="IPR056547">
    <property type="entry name" value="NUP160_helical"/>
</dbReference>
<dbReference type="InterPro" id="IPR056536">
    <property type="entry name" value="TPR_NUP160_C"/>
</dbReference>
<dbReference type="InterPro" id="IPR056535">
    <property type="entry name" value="TPR_NUP160_M"/>
</dbReference>
<dbReference type="PANTHER" id="PTHR21286">
    <property type="entry name" value="NUCLEAR PORE COMPLEX PROTEIN NUP160"/>
    <property type="match status" value="1"/>
</dbReference>
<dbReference type="PANTHER" id="PTHR21286:SF0">
    <property type="entry name" value="NUCLEAR PORE COMPLEX PROTEIN NUP160"/>
    <property type="match status" value="1"/>
</dbReference>
<dbReference type="Pfam" id="PF11715">
    <property type="entry name" value="Beta-prop_Nup120_160"/>
    <property type="match status" value="1"/>
</dbReference>
<dbReference type="Pfam" id="PF23345">
    <property type="entry name" value="NUP160_helical"/>
    <property type="match status" value="1"/>
</dbReference>
<dbReference type="Pfam" id="PF23354">
    <property type="entry name" value="TPR_NUP160_120_M"/>
    <property type="match status" value="1"/>
</dbReference>
<dbReference type="Pfam" id="PF23347">
    <property type="entry name" value="TPR_Nup160_C"/>
    <property type="match status" value="1"/>
</dbReference>
<gene>
    <name type="primary">NUP160</name>
    <name type="synonym">KIAA0197</name>
    <name type="synonym">NUP120</name>
</gene>
<comment type="function">
    <text evidence="1 2">Functions as a component of the nuclear pore complex (NPC) (PubMed:11564755, PubMed:11684705). Involved in poly(A)+ RNA transport.</text>
</comment>
<comment type="subunit">
    <text evidence="1 2">Part of the nuclear pore complex (NPC) (PubMed:11564755, PubMed:11684705). Forms part of the NUP160 subcomplex in the nuclear pore which is composed of NUP160, NUP133, NUP107 and NUP96 (PubMed:11564755, PubMed:11684705). This complex plays a role in RNA export and in tethering NUP98 and NUP153 to the nucleus (PubMed:11564755, PubMed:11684705).</text>
</comment>
<comment type="interaction">
    <interactant intactId="EBI-295715">
        <id>Q12769</id>
    </interactant>
    <interactant intactId="EBI-529989">
        <id>Q9NRI5</id>
        <label>DISC1</label>
    </interactant>
    <organismsDiffer>false</organismsDiffer>
    <experiments>3</experiments>
</comment>
<comment type="interaction">
    <interactant intactId="EBI-295715">
        <id>Q12769</id>
    </interactant>
    <interactant intactId="EBI-2834260">
        <id>P62508</id>
        <label>ESRRG</label>
    </interactant>
    <organismsDiffer>false</organismsDiffer>
    <experiments>3</experiments>
</comment>
<comment type="interaction">
    <interactant intactId="EBI-295715">
        <id>Q12769</id>
    </interactant>
    <interactant intactId="EBI-716392">
        <id>Q9BW27</id>
        <label>NUP85</label>
    </interactant>
    <organismsDiffer>false</organismsDiffer>
    <experiments>3</experiments>
</comment>
<comment type="subcellular location">
    <subcellularLocation>
        <location evidence="1 2">Nucleus</location>
        <location evidence="1 2">Nuclear pore complex</location>
    </subcellularLocation>
</comment>
<comment type="alternative products">
    <event type="alternative splicing"/>
    <isoform>
        <id>Q12769-1</id>
        <name>1</name>
        <sequence type="displayed"/>
    </isoform>
    <isoform>
        <id>Q12769-2</id>
        <name>2</name>
        <sequence type="described" ref="VSP_007093 VSP_007094"/>
    </isoform>
    <isoform>
        <id>Q12769-3</id>
        <name>3</name>
        <sequence type="described" ref="VSP_037350 VSP_037351 VSP_037352 VSP_037353"/>
    </isoform>
</comment>
<comment type="disease" evidence="5 6">
    <disease id="DI-05380">
        <name>Nephrotic syndrome 19</name>
        <acronym>NPHS19</acronym>
        <description>A form of nephrotic syndrome, a renal disease clinically characterized by severe proteinuria, resulting in complications such as hypoalbuminemia, hyperlipidemia and edema. Kidney biopsies show non-specific histologic changes such as focal segmental glomerulosclerosis and diffuse mesangial proliferation. Some affected individuals have an inherited steroid-resistant form that progresses to end-stage renal failure. NPHS19 is an autosomal recessive, steroid-resistant form with onset in the first or second decade of life, resulting in chronic kidney disease.</description>
        <dbReference type="MIM" id="618178"/>
    </disease>
    <text>The disease may be caused by variants affecting the gene represented in this entry.</text>
</comment>
<comment type="caution">
    <text evidence="9">It is uncertain whether Met-1 or Met-35 is the initiator.</text>
</comment>
<comment type="sequence caution" evidence="9">
    <conflict type="erroneous initiation">
        <sequence resource="EMBL-CDS" id="AAH09822"/>
    </conflict>
</comment>
<comment type="sequence caution" evidence="9">
    <conflict type="miscellaneous discrepancy">
        <sequence resource="EMBL-CDS" id="BAA12110"/>
    </conflict>
    <text>Probable cloning artifact. Aberrant splice sites.</text>
</comment>
<comment type="sequence caution" evidence="9">
    <conflict type="erroneous initiation">
        <sequence resource="EMBL-CDS" id="BAB15406"/>
    </conflict>
</comment>
<comment type="sequence caution" evidence="9">
    <conflict type="erroneous initiation">
        <sequence resource="EMBL-CDS" id="BAG65161"/>
    </conflict>
</comment>
<accession>Q12769</accession>
<accession>B4DYE8</accession>
<accession>B4E2J9</accession>
<accession>Q08AD3</accession>
<accession>Q7Z5X6</accession>
<accession>Q96GB3</accession>
<accession>Q9H660</accession>
<feature type="chain" id="PRO_0000204851" description="Nuclear pore complex protein Nup160">
    <location>
        <begin position="1"/>
        <end position="1436"/>
    </location>
</feature>
<feature type="modified residue" description="Phosphoserine" evidence="16">
    <location>
        <position position="44"/>
    </location>
</feature>
<feature type="modified residue" description="Phosphoserine" evidence="16">
    <location>
        <position position="490"/>
    </location>
</feature>
<feature type="modified residue" description="Phosphoserine" evidence="16">
    <location>
        <position position="949"/>
    </location>
</feature>
<feature type="modified residue" description="Phosphoserine" evidence="10 11 12 13 14 15 16">
    <location>
        <position position="1157"/>
    </location>
</feature>
<feature type="splice variant" id="VSP_037350" description="In isoform 3." evidence="7">
    <location>
        <begin position="1"/>
        <end position="250"/>
    </location>
</feature>
<feature type="splice variant" id="VSP_007093" description="In isoform 2." evidence="7 8">
    <original>SELVVDSQMQSIFTDIGKVDFTDPCNYQLIPAVPGISPNSTASTAWLSSD</original>
    <variation>SVSWLSAISFISQITLGVTNVVLERCLLELKEIWILVIPHQAYFDSYRLK</variation>
    <location>
        <begin position="175"/>
        <end position="224"/>
    </location>
</feature>
<feature type="splice variant" id="VSP_007094" description="In isoform 2." evidence="7 8">
    <location>
        <begin position="225"/>
        <end position="1436"/>
    </location>
</feature>
<feature type="splice variant" id="VSP_037351" description="In isoform 3." evidence="7">
    <original>Q</original>
    <variation>QRRGFAMLPGLKLLSSSSPPTSASQCAGITSVNHSTQPEFF</variation>
    <location>
        <position position="367"/>
    </location>
</feature>
<feature type="splice variant" id="VSP_037352" description="In isoform 3." evidence="7">
    <original>AQ</original>
    <variation>GK</variation>
    <location>
        <begin position="694"/>
        <end position="695"/>
    </location>
</feature>
<feature type="splice variant" id="VSP_037353" description="In isoform 3." evidence="7">
    <location>
        <begin position="696"/>
        <end position="1436"/>
    </location>
</feature>
<feature type="sequence variant" id="VAR_055409" description="In dbSNP:rs2305984." evidence="3">
    <original>A</original>
    <variation>T</variation>
    <location>
        <position position="40"/>
    </location>
</feature>
<feature type="sequence variant" id="VAR_055410" description="In dbSNP:rs3816605." evidence="4">
    <original>T</original>
    <variation>A</variation>
    <location>
        <position position="351"/>
    </location>
</feature>
<feature type="sequence variant" id="VAR_081362" description="In NPHS19; uncertain significance; dbSNP:rs775637217." evidence="5 6">
    <original>E</original>
    <variation>K</variation>
    <location>
        <position position="803"/>
    </location>
</feature>
<feature type="sequence variant" id="VAR_081363" description="In NPHS19; uncertain significance." evidence="5">
    <location>
        <begin position="910"/>
        <end position="1436"/>
    </location>
</feature>
<feature type="sequence variant" id="VAR_083006" description="In NPHS19; uncertain significance." evidence="6">
    <location>
        <begin position="1173"/>
        <end position="1436"/>
    </location>
</feature>
<feature type="sequence conflict" description="In Ref. 1; BAG65161." evidence="9" ref="1">
    <original>I</original>
    <variation>K</variation>
    <location>
        <position position="152"/>
    </location>
</feature>
<feature type="sequence conflict" description="In Ref. 4; BAA12110." evidence="9" ref="4">
    <original>G</original>
    <variation>S</variation>
    <location>
        <position position="991"/>
    </location>
</feature>
<name>NU160_HUMAN</name>
<evidence type="ECO:0000269" key="1">
    <source>
    </source>
</evidence>
<evidence type="ECO:0000269" key="2">
    <source>
    </source>
</evidence>
<evidence type="ECO:0000269" key="3">
    <source>
    </source>
</evidence>
<evidence type="ECO:0000269" key="4">
    <source>
    </source>
</evidence>
<evidence type="ECO:0000269" key="5">
    <source>
    </source>
</evidence>
<evidence type="ECO:0000269" key="6">
    <source>
    </source>
</evidence>
<evidence type="ECO:0000303" key="7">
    <source>
    </source>
</evidence>
<evidence type="ECO:0000303" key="8">
    <source>
    </source>
</evidence>
<evidence type="ECO:0000305" key="9"/>
<evidence type="ECO:0007744" key="10">
    <source>
    </source>
</evidence>
<evidence type="ECO:0007744" key="11">
    <source>
    </source>
</evidence>
<evidence type="ECO:0007744" key="12">
    <source>
    </source>
</evidence>
<evidence type="ECO:0007744" key="13">
    <source>
    </source>
</evidence>
<evidence type="ECO:0007744" key="14">
    <source>
    </source>
</evidence>
<evidence type="ECO:0007744" key="15">
    <source>
    </source>
</evidence>
<evidence type="ECO:0007744" key="16">
    <source>
    </source>
</evidence>